<gene>
    <name evidence="1" type="primary">rsmH</name>
    <name type="synonym">mraW</name>
    <name type="ordered locus">SGO_0573</name>
</gene>
<reference key="1">
    <citation type="journal article" date="2007" name="J. Bacteriol.">
        <title>Genome-wide transcriptional changes in Streptococcus gordonii in response to competence signaling peptide.</title>
        <authorList>
            <person name="Vickerman M.M."/>
            <person name="Iobst S."/>
            <person name="Jesionowski A.M."/>
            <person name="Gill S.R."/>
        </authorList>
    </citation>
    <scope>NUCLEOTIDE SEQUENCE [LARGE SCALE GENOMIC DNA]</scope>
    <source>
        <strain>Challis / ATCC 35105 / BCRC 15272 / CH1 / DL1 / V288</strain>
    </source>
</reference>
<sequence length="316" mass="35914">MTNEFHHVTVLLHETIDYLDVKPDGVYVDATLGGAGHSEYLLSKLSPKGHLYAFDQDATAIEHAKKRLAPYIEKGMVTFVQDNFRHLKLQLEKLGVDEIDGICYDLGVSSPQLDERERGFSYKQDAPLDMRMNRHADFSAYQVVNDYDYHDLVRIFFKYGEDKFSKQIARKIEQARQIKPIETTTELAEIIKSAKPAKELKKKGHPAKQIFQAIRIEVNDELGAADESIQQAIDLLAVDGRISVITFHSLEDRLTKQLFKEASTVDVPKGLPFIPDDLKPKLELISRKPILPSAEELELNNRAHSAKLRVAKKVHK</sequence>
<comment type="function">
    <text evidence="1">Specifically methylates the N4 position of cytidine in position 1402 (C1402) of 16S rRNA.</text>
</comment>
<comment type="catalytic activity">
    <reaction evidence="1">
        <text>cytidine(1402) in 16S rRNA + S-adenosyl-L-methionine = N(4)-methylcytidine(1402) in 16S rRNA + S-adenosyl-L-homocysteine + H(+)</text>
        <dbReference type="Rhea" id="RHEA:42928"/>
        <dbReference type="Rhea" id="RHEA-COMP:10286"/>
        <dbReference type="Rhea" id="RHEA-COMP:10287"/>
        <dbReference type="ChEBI" id="CHEBI:15378"/>
        <dbReference type="ChEBI" id="CHEBI:57856"/>
        <dbReference type="ChEBI" id="CHEBI:59789"/>
        <dbReference type="ChEBI" id="CHEBI:74506"/>
        <dbReference type="ChEBI" id="CHEBI:82748"/>
        <dbReference type="EC" id="2.1.1.199"/>
    </reaction>
</comment>
<comment type="subcellular location">
    <subcellularLocation>
        <location evidence="1">Cytoplasm</location>
    </subcellularLocation>
</comment>
<comment type="similarity">
    <text evidence="1">Belongs to the methyltransferase superfamily. RsmH family.</text>
</comment>
<keyword id="KW-0963">Cytoplasm</keyword>
<keyword id="KW-0489">Methyltransferase</keyword>
<keyword id="KW-1185">Reference proteome</keyword>
<keyword id="KW-0698">rRNA processing</keyword>
<keyword id="KW-0949">S-adenosyl-L-methionine</keyword>
<keyword id="KW-0808">Transferase</keyword>
<dbReference type="EC" id="2.1.1.199" evidence="1"/>
<dbReference type="EMBL" id="CP000725">
    <property type="protein sequence ID" value="ABV11077.1"/>
    <property type="molecule type" value="Genomic_DNA"/>
</dbReference>
<dbReference type="RefSeq" id="WP_012000069.1">
    <property type="nucleotide sequence ID" value="NC_009785.1"/>
</dbReference>
<dbReference type="SMR" id="A8AVS9"/>
<dbReference type="STRING" id="467705.SGO_0573"/>
<dbReference type="KEGG" id="sgo:SGO_0573"/>
<dbReference type="eggNOG" id="COG0275">
    <property type="taxonomic scope" value="Bacteria"/>
</dbReference>
<dbReference type="HOGENOM" id="CLU_038422_2_0_9"/>
<dbReference type="Proteomes" id="UP000001131">
    <property type="component" value="Chromosome"/>
</dbReference>
<dbReference type="GO" id="GO:0005737">
    <property type="term" value="C:cytoplasm"/>
    <property type="evidence" value="ECO:0007669"/>
    <property type="project" value="UniProtKB-SubCell"/>
</dbReference>
<dbReference type="GO" id="GO:0071424">
    <property type="term" value="F:rRNA (cytosine-N4-)-methyltransferase activity"/>
    <property type="evidence" value="ECO:0007669"/>
    <property type="project" value="UniProtKB-UniRule"/>
</dbReference>
<dbReference type="GO" id="GO:0070475">
    <property type="term" value="P:rRNA base methylation"/>
    <property type="evidence" value="ECO:0007669"/>
    <property type="project" value="UniProtKB-UniRule"/>
</dbReference>
<dbReference type="FunFam" id="1.10.150.170:FF:000001">
    <property type="entry name" value="Ribosomal RNA small subunit methyltransferase H"/>
    <property type="match status" value="1"/>
</dbReference>
<dbReference type="Gene3D" id="1.10.150.170">
    <property type="entry name" value="Putative methyltransferase TM0872, insert domain"/>
    <property type="match status" value="1"/>
</dbReference>
<dbReference type="Gene3D" id="3.40.50.150">
    <property type="entry name" value="Vaccinia Virus protein VP39"/>
    <property type="match status" value="1"/>
</dbReference>
<dbReference type="HAMAP" id="MF_01007">
    <property type="entry name" value="16SrRNA_methyltr_H"/>
    <property type="match status" value="1"/>
</dbReference>
<dbReference type="InterPro" id="IPR002903">
    <property type="entry name" value="RsmH"/>
</dbReference>
<dbReference type="InterPro" id="IPR023397">
    <property type="entry name" value="SAM-dep_MeTrfase_MraW_recog"/>
</dbReference>
<dbReference type="InterPro" id="IPR029063">
    <property type="entry name" value="SAM-dependent_MTases_sf"/>
</dbReference>
<dbReference type="NCBIfam" id="TIGR00006">
    <property type="entry name" value="16S rRNA (cytosine(1402)-N(4))-methyltransferase RsmH"/>
    <property type="match status" value="1"/>
</dbReference>
<dbReference type="PANTHER" id="PTHR11265:SF0">
    <property type="entry name" value="12S RRNA N4-METHYLCYTIDINE METHYLTRANSFERASE"/>
    <property type="match status" value="1"/>
</dbReference>
<dbReference type="PANTHER" id="PTHR11265">
    <property type="entry name" value="S-ADENOSYL-METHYLTRANSFERASE MRAW"/>
    <property type="match status" value="1"/>
</dbReference>
<dbReference type="Pfam" id="PF01795">
    <property type="entry name" value="Methyltransf_5"/>
    <property type="match status" value="1"/>
</dbReference>
<dbReference type="PIRSF" id="PIRSF004486">
    <property type="entry name" value="MraW"/>
    <property type="match status" value="1"/>
</dbReference>
<dbReference type="SUPFAM" id="SSF81799">
    <property type="entry name" value="Putative methyltransferase TM0872, insert domain"/>
    <property type="match status" value="1"/>
</dbReference>
<dbReference type="SUPFAM" id="SSF53335">
    <property type="entry name" value="S-adenosyl-L-methionine-dependent methyltransferases"/>
    <property type="match status" value="1"/>
</dbReference>
<name>RSMH_STRGC</name>
<evidence type="ECO:0000255" key="1">
    <source>
        <dbReference type="HAMAP-Rule" id="MF_01007"/>
    </source>
</evidence>
<organism>
    <name type="scientific">Streptococcus gordonii (strain Challis / ATCC 35105 / BCRC 15272 / CH1 / DL1 / V288)</name>
    <dbReference type="NCBI Taxonomy" id="467705"/>
    <lineage>
        <taxon>Bacteria</taxon>
        <taxon>Bacillati</taxon>
        <taxon>Bacillota</taxon>
        <taxon>Bacilli</taxon>
        <taxon>Lactobacillales</taxon>
        <taxon>Streptococcaceae</taxon>
        <taxon>Streptococcus</taxon>
    </lineage>
</organism>
<feature type="chain" id="PRO_0000387148" description="Ribosomal RNA small subunit methyltransferase H">
    <location>
        <begin position="1"/>
        <end position="316"/>
    </location>
</feature>
<feature type="binding site" evidence="1">
    <location>
        <begin position="35"/>
        <end position="37"/>
    </location>
    <ligand>
        <name>S-adenosyl-L-methionine</name>
        <dbReference type="ChEBI" id="CHEBI:59789"/>
    </ligand>
</feature>
<feature type="binding site" evidence="1">
    <location>
        <position position="55"/>
    </location>
    <ligand>
        <name>S-adenosyl-L-methionine</name>
        <dbReference type="ChEBI" id="CHEBI:59789"/>
    </ligand>
</feature>
<feature type="binding site" evidence="1">
    <location>
        <position position="84"/>
    </location>
    <ligand>
        <name>S-adenosyl-L-methionine</name>
        <dbReference type="ChEBI" id="CHEBI:59789"/>
    </ligand>
</feature>
<feature type="binding site" evidence="1">
    <location>
        <position position="105"/>
    </location>
    <ligand>
        <name>S-adenosyl-L-methionine</name>
        <dbReference type="ChEBI" id="CHEBI:59789"/>
    </ligand>
</feature>
<feature type="binding site" evidence="1">
    <location>
        <position position="112"/>
    </location>
    <ligand>
        <name>S-adenosyl-L-methionine</name>
        <dbReference type="ChEBI" id="CHEBI:59789"/>
    </ligand>
</feature>
<accession>A8AVS9</accession>
<proteinExistence type="inferred from homology"/>
<protein>
    <recommendedName>
        <fullName evidence="1">Ribosomal RNA small subunit methyltransferase H</fullName>
        <ecNumber evidence="1">2.1.1.199</ecNumber>
    </recommendedName>
    <alternativeName>
        <fullName evidence="1">16S rRNA m(4)C1402 methyltransferase</fullName>
    </alternativeName>
    <alternativeName>
        <fullName evidence="1">rRNA (cytosine-N(4)-)-methyltransferase RsmH</fullName>
    </alternativeName>
</protein>